<dbReference type="EMBL" id="Z73282">
    <property type="protein sequence ID" value="CAA97677.1"/>
    <property type="molecule type" value="Genomic_DNA"/>
</dbReference>
<dbReference type="EMBL" id="U53878">
    <property type="protein sequence ID" value="AAB67555.1"/>
    <property type="molecule type" value="Genomic_DNA"/>
</dbReference>
<dbReference type="EMBL" id="AY557929">
    <property type="protein sequence ID" value="AAS56255.1"/>
    <property type="molecule type" value="Genomic_DNA"/>
</dbReference>
<dbReference type="EMBL" id="BK006945">
    <property type="protein sequence ID" value="DAA09426.1"/>
    <property type="molecule type" value="Genomic_DNA"/>
</dbReference>
<dbReference type="PIR" id="S64947">
    <property type="entry name" value="S64947"/>
</dbReference>
<dbReference type="RefSeq" id="NP_013211.1">
    <property type="nucleotide sequence ID" value="NM_001181997.1"/>
</dbReference>
<dbReference type="BioGRID" id="31383">
    <property type="interactions" value="316"/>
</dbReference>
<dbReference type="DIP" id="DIP-4570N"/>
<dbReference type="FunCoup" id="Q12127">
    <property type="interactions" value="114"/>
</dbReference>
<dbReference type="IntAct" id="Q12127">
    <property type="interactions" value="11"/>
</dbReference>
<dbReference type="MINT" id="Q12127"/>
<dbReference type="STRING" id="4932.YLR110C"/>
<dbReference type="GlyCosmos" id="Q12127">
    <property type="glycosylation" value="15 sites, No reported glycans"/>
</dbReference>
<dbReference type="GlyGen" id="Q12127">
    <property type="glycosylation" value="15 sites"/>
</dbReference>
<dbReference type="iPTMnet" id="Q12127"/>
<dbReference type="PaxDb" id="4932-YLR110C"/>
<dbReference type="PeptideAtlas" id="Q12127"/>
<dbReference type="EnsemblFungi" id="YLR110C_mRNA">
    <property type="protein sequence ID" value="YLR110C"/>
    <property type="gene ID" value="YLR110C"/>
</dbReference>
<dbReference type="GeneID" id="850800"/>
<dbReference type="KEGG" id="sce:YLR110C"/>
<dbReference type="AGR" id="SGD:S000004100"/>
<dbReference type="SGD" id="S000004100">
    <property type="gene designation" value="CCW12"/>
</dbReference>
<dbReference type="VEuPathDB" id="FungiDB:YLR110C"/>
<dbReference type="eggNOG" id="ENOG502S42T">
    <property type="taxonomic scope" value="Eukaryota"/>
</dbReference>
<dbReference type="HOGENOM" id="CLU_105987_1_0_1"/>
<dbReference type="InParanoid" id="Q12127"/>
<dbReference type="OMA" id="SCEDHAC"/>
<dbReference type="OrthoDB" id="3998251at2759"/>
<dbReference type="BioCyc" id="YEAST:G3O-32257-MONOMER"/>
<dbReference type="BioGRID-ORCS" id="850800">
    <property type="hits" value="3 hits in 10 CRISPR screens"/>
</dbReference>
<dbReference type="PRO" id="PR:Q12127"/>
<dbReference type="Proteomes" id="UP000002311">
    <property type="component" value="Chromosome XII"/>
</dbReference>
<dbReference type="RNAct" id="Q12127">
    <property type="molecule type" value="protein"/>
</dbReference>
<dbReference type="GO" id="GO:0071944">
    <property type="term" value="C:cell periphery"/>
    <property type="evidence" value="ECO:0007005"/>
    <property type="project" value="SGD"/>
</dbReference>
<dbReference type="GO" id="GO:0005934">
    <property type="term" value="C:cellular bud tip"/>
    <property type="evidence" value="ECO:0000314"/>
    <property type="project" value="SGD"/>
</dbReference>
<dbReference type="GO" id="GO:0005576">
    <property type="term" value="C:extracellular region"/>
    <property type="evidence" value="ECO:0007669"/>
    <property type="project" value="UniProtKB-KW"/>
</dbReference>
<dbReference type="GO" id="GO:0009277">
    <property type="term" value="C:fungal-type cell wall"/>
    <property type="evidence" value="ECO:0000314"/>
    <property type="project" value="SGD"/>
</dbReference>
<dbReference type="GO" id="GO:0000324">
    <property type="term" value="C:fungal-type vacuole"/>
    <property type="evidence" value="ECO:0007005"/>
    <property type="project" value="SGD"/>
</dbReference>
<dbReference type="GO" id="GO:0043332">
    <property type="term" value="C:mating projection tip"/>
    <property type="evidence" value="ECO:0000314"/>
    <property type="project" value="SGD"/>
</dbReference>
<dbReference type="GO" id="GO:0098552">
    <property type="term" value="C:side of membrane"/>
    <property type="evidence" value="ECO:0007669"/>
    <property type="project" value="UniProtKB-KW"/>
</dbReference>
<dbReference type="GO" id="GO:0005199">
    <property type="term" value="F:structural constituent of cell wall"/>
    <property type="evidence" value="ECO:0000315"/>
    <property type="project" value="CACAO"/>
</dbReference>
<dbReference type="GO" id="GO:0000752">
    <property type="term" value="P:agglutination involved in conjugation with cellular fusion"/>
    <property type="evidence" value="ECO:0000315"/>
    <property type="project" value="SGD"/>
</dbReference>
<dbReference type="GO" id="GO:0000747">
    <property type="term" value="P:conjugation with cellular fusion"/>
    <property type="evidence" value="ECO:0000315"/>
    <property type="project" value="SGD"/>
</dbReference>
<dbReference type="GO" id="GO:0031505">
    <property type="term" value="P:fungal-type cell wall organization"/>
    <property type="evidence" value="ECO:0000315"/>
    <property type="project" value="SGD"/>
</dbReference>
<dbReference type="InterPro" id="IPR025928">
    <property type="entry name" value="Flocculin_t3_rpt"/>
</dbReference>
<dbReference type="Pfam" id="PF13928">
    <property type="entry name" value="Flocculin_t3"/>
    <property type="match status" value="1"/>
</dbReference>
<evidence type="ECO:0000255" key="1"/>
<evidence type="ECO:0000256" key="2">
    <source>
        <dbReference type="SAM" id="MobiDB-lite"/>
    </source>
</evidence>
<evidence type="ECO:0000269" key="3">
    <source>
    </source>
</evidence>
<evidence type="ECO:0000269" key="4">
    <source>
    </source>
</evidence>
<evidence type="ECO:0000269" key="5">
    <source>
    </source>
</evidence>
<evidence type="ECO:0000269" key="6">
    <source>
    </source>
</evidence>
<evidence type="ECO:0000305" key="7"/>
<evidence type="ECO:0007744" key="8">
    <source>
    </source>
</evidence>
<sequence>MQFSTVASIAAVAAVASAAANVTTATVSQESTTLVTITSCEDHVCSETVSPALVSTATVTVDDVITQYTTWCPLTTEAPKNGTSTAAPVTSTEAPKNTTSAAPTHSVTSYTGAAAKALPAAGALLAGAAALLL</sequence>
<organism>
    <name type="scientific">Saccharomyces cerevisiae (strain ATCC 204508 / S288c)</name>
    <name type="common">Baker's yeast</name>
    <dbReference type="NCBI Taxonomy" id="559292"/>
    <lineage>
        <taxon>Eukaryota</taxon>
        <taxon>Fungi</taxon>
        <taxon>Dikarya</taxon>
        <taxon>Ascomycota</taxon>
        <taxon>Saccharomycotina</taxon>
        <taxon>Saccharomycetes</taxon>
        <taxon>Saccharomycetales</taxon>
        <taxon>Saccharomycetaceae</taxon>
        <taxon>Saccharomyces</taxon>
    </lineage>
</organism>
<comment type="function">
    <text evidence="6">Component of the cell wall. May play a role in the formation of a tightly packed outer mannan layer, which protects the inner glucan.</text>
</comment>
<comment type="subcellular location">
    <subcellularLocation>
        <location>Secreted</location>
        <location>Cell wall</location>
    </subcellularLocation>
    <subcellularLocation>
        <location>Membrane</location>
        <topology>Lipid-anchor</topology>
        <topology>GPI-anchor</topology>
    </subcellularLocation>
    <text>Covalently-linked GPI-modified cell wall protein (GPI-CWP).</text>
</comment>
<comment type="PTM">
    <text evidence="5 6">Extensively O-glycosylated; glycans consist probably of single mannose residues. N-glycosylated.</text>
</comment>
<comment type="PTM">
    <text>The GPI-anchor is attached to the protein in the endoplasmic reticulum and serves to target the protein to the cell surface. There, the glucosamine-inositol phospholipid moiety is cleaved off and the GPI-modified mannoprotein is covalently attached via its lipidless GPI glycan remnant to the 1,6-beta-glucan of the outer cell wall layer.</text>
</comment>
<comment type="miscellaneous">
    <text evidence="4">Present with 158000 molecules/cell in log phase SD medium.</text>
</comment>
<comment type="similarity">
    <text evidence="7">To yeast protein YDR134C.</text>
</comment>
<keyword id="KW-0134">Cell wall</keyword>
<keyword id="KW-0961">Cell wall biogenesis/degradation</keyword>
<keyword id="KW-0903">Direct protein sequencing</keyword>
<keyword id="KW-0325">Glycoprotein</keyword>
<keyword id="KW-0336">GPI-anchor</keyword>
<keyword id="KW-1017">Isopeptide bond</keyword>
<keyword id="KW-0449">Lipoprotein</keyword>
<keyword id="KW-0472">Membrane</keyword>
<keyword id="KW-1185">Reference proteome</keyword>
<keyword id="KW-0677">Repeat</keyword>
<keyword id="KW-0964">Secreted</keyword>
<keyword id="KW-0732">Signal</keyword>
<keyword id="KW-0832">Ubl conjugation</keyword>
<name>CCW12_YEAST</name>
<protein>
    <recommendedName>
        <fullName>Covalently-linked cell wall protein 12</fullName>
    </recommendedName>
    <alternativeName>
        <fullName>Protein Alpha0.6</fullName>
    </alternativeName>
</protein>
<accession>Q12127</accession>
<accession>D6VYB0</accession>
<gene>
    <name type="primary">CCW12</name>
    <name type="ordered locus">YLR110C</name>
    <name type="ORF">L9354.7</name>
</gene>
<reference key="1">
    <citation type="journal article" date="1997" name="Yeast">
        <title>Sequence analysis of a 37.6 kbp cosmid clone from the right arm of Saccharomyces cerevisiae chromosome XII, carrying YAP3, HOG1, SNR6, tRNA-Arg3 and 23 new open reading frames, among which several homologies to proteins involved in cell division control and to mammalian growth factors and other animal proteins are found.</title>
        <authorList>
            <person name="Verhasselt P."/>
            <person name="Volckaert G."/>
        </authorList>
    </citation>
    <scope>NUCLEOTIDE SEQUENCE [GENOMIC DNA]</scope>
    <source>
        <strain>ATCC 90840 / EAY235 / FY23</strain>
    </source>
</reference>
<reference key="2">
    <citation type="journal article" date="1997" name="Nature">
        <title>The nucleotide sequence of Saccharomyces cerevisiae chromosome XII.</title>
        <authorList>
            <person name="Johnston M."/>
            <person name="Hillier L.W."/>
            <person name="Riles L."/>
            <person name="Albermann K."/>
            <person name="Andre B."/>
            <person name="Ansorge W."/>
            <person name="Benes V."/>
            <person name="Brueckner M."/>
            <person name="Delius H."/>
            <person name="Dubois E."/>
            <person name="Duesterhoeft A."/>
            <person name="Entian K.-D."/>
            <person name="Floeth M."/>
            <person name="Goffeau A."/>
            <person name="Hebling U."/>
            <person name="Heumann K."/>
            <person name="Heuss-Neitzel D."/>
            <person name="Hilbert H."/>
            <person name="Hilger F."/>
            <person name="Kleine K."/>
            <person name="Koetter P."/>
            <person name="Louis E.J."/>
            <person name="Messenguy F."/>
            <person name="Mewes H.-W."/>
            <person name="Miosga T."/>
            <person name="Moestl D."/>
            <person name="Mueller-Auer S."/>
            <person name="Nentwich U."/>
            <person name="Obermaier B."/>
            <person name="Piravandi E."/>
            <person name="Pohl T.M."/>
            <person name="Portetelle D."/>
            <person name="Purnelle B."/>
            <person name="Rechmann S."/>
            <person name="Rieger M."/>
            <person name="Rinke M."/>
            <person name="Rose M."/>
            <person name="Scharfe M."/>
            <person name="Scherens B."/>
            <person name="Scholler P."/>
            <person name="Schwager C."/>
            <person name="Schwarz S."/>
            <person name="Underwood A.P."/>
            <person name="Urrestarazu L.A."/>
            <person name="Vandenbol M."/>
            <person name="Verhasselt P."/>
            <person name="Vierendeels F."/>
            <person name="Voet M."/>
            <person name="Volckaert G."/>
            <person name="Voss H."/>
            <person name="Wambutt R."/>
            <person name="Wedler E."/>
            <person name="Wedler H."/>
            <person name="Zimmermann F.K."/>
            <person name="Zollner A."/>
            <person name="Hani J."/>
            <person name="Hoheisel J.D."/>
        </authorList>
    </citation>
    <scope>NUCLEOTIDE SEQUENCE [LARGE SCALE GENOMIC DNA]</scope>
    <source>
        <strain>ATCC 204508 / S288c</strain>
    </source>
</reference>
<reference key="3">
    <citation type="journal article" date="2014" name="G3 (Bethesda)">
        <title>The reference genome sequence of Saccharomyces cerevisiae: Then and now.</title>
        <authorList>
            <person name="Engel S.R."/>
            <person name="Dietrich F.S."/>
            <person name="Fisk D.G."/>
            <person name="Binkley G."/>
            <person name="Balakrishnan R."/>
            <person name="Costanzo M.C."/>
            <person name="Dwight S.S."/>
            <person name="Hitz B.C."/>
            <person name="Karra K."/>
            <person name="Nash R.S."/>
            <person name="Weng S."/>
            <person name="Wong E.D."/>
            <person name="Lloyd P."/>
            <person name="Skrzypek M.S."/>
            <person name="Miyasato S.R."/>
            <person name="Simison M."/>
            <person name="Cherry J.M."/>
        </authorList>
    </citation>
    <scope>GENOME REANNOTATION</scope>
    <source>
        <strain>ATCC 204508 / S288c</strain>
    </source>
</reference>
<reference key="4">
    <citation type="journal article" date="1997" name="Yeast">
        <title>Characterization of two new genes down-regulated by alpha-factor.</title>
        <authorList>
            <person name="Seidel J."/>
            <person name="Tanner W."/>
        </authorList>
    </citation>
    <scope>NUCLEOTIDE SEQUENCE [GENOMIC DNA]</scope>
</reference>
<reference key="5">
    <citation type="journal article" date="2007" name="Genome Res.">
        <title>Approaching a complete repository of sequence-verified protein-encoding clones for Saccharomyces cerevisiae.</title>
        <authorList>
            <person name="Hu Y."/>
            <person name="Rolfs A."/>
            <person name="Bhullar B."/>
            <person name="Murthy T.V.S."/>
            <person name="Zhu C."/>
            <person name="Berger M.F."/>
            <person name="Camargo A.A."/>
            <person name="Kelley F."/>
            <person name="McCarron S."/>
            <person name="Jepson D."/>
            <person name="Richardson A."/>
            <person name="Raphael J."/>
            <person name="Moreira D."/>
            <person name="Taycher E."/>
            <person name="Zuo D."/>
            <person name="Mohr S."/>
            <person name="Kane M.F."/>
            <person name="Williamson J."/>
            <person name="Simpson A.J.G."/>
            <person name="Bulyk M.L."/>
            <person name="Harlow E."/>
            <person name="Marsischky G."/>
            <person name="Kolodner R.D."/>
            <person name="LaBaer J."/>
        </authorList>
    </citation>
    <scope>NUCLEOTIDE SEQUENCE [GENOMIC DNA]</scope>
    <source>
        <strain>ATCC 204508 / S288c</strain>
    </source>
</reference>
<reference key="6">
    <citation type="journal article" date="1999" name="J. Bacteriol.">
        <title>Deletion of new covalently linked cell wall glycoproteins alters the electrophoretic mobility of phosphorylated wall components of Saccharomyces cerevisiae.</title>
        <authorList>
            <person name="Mrsa V."/>
            <person name="Ecker M."/>
            <person name="Strahl-Bolsinger S."/>
            <person name="Nimtz M."/>
            <person name="Lehle L."/>
            <person name="Tanner W."/>
        </authorList>
    </citation>
    <scope>PROTEIN SEQUENCE OF 19-51</scope>
    <scope>CHARACTERIZATION</scope>
    <scope>SUBCELLULAR LOCATION</scope>
</reference>
<reference key="7">
    <citation type="journal article" date="1998" name="Mol. Gen. Genet.">
        <title>Screening for glycosylphosphatidylinositol (GPI)-dependent cell wall proteins in Saccharomyces cerevisiae.</title>
        <authorList>
            <person name="Hamada K."/>
            <person name="Fukuchi S."/>
            <person name="Arisawa M."/>
            <person name="Baba M."/>
            <person name="Kitada K."/>
        </authorList>
    </citation>
    <scope>SUBCELLULAR LOCATION</scope>
</reference>
<reference key="8">
    <citation type="journal article" date="2003" name="Nature">
        <title>Global analysis of protein expression in yeast.</title>
        <authorList>
            <person name="Ghaemmaghami S."/>
            <person name="Huh W.-K."/>
            <person name="Bower K."/>
            <person name="Howson R.W."/>
            <person name="Belle A."/>
            <person name="Dephoure N."/>
            <person name="O'Shea E.K."/>
            <person name="Weissman J.S."/>
        </authorList>
    </citation>
    <scope>LEVEL OF PROTEIN EXPRESSION [LARGE SCALE ANALYSIS]</scope>
</reference>
<reference key="9">
    <citation type="journal article" date="2004" name="Mol. Microbiol.">
        <title>Sed1p and Srl1p are required to compensate for cell wall instability in Saccharomyces cerevisiae mutants defective in multiple GPI-anchored mannoproteins.</title>
        <authorList>
            <person name="Hagen I."/>
            <person name="Ecker M."/>
            <person name="Lagorce A."/>
            <person name="Francois J.M."/>
            <person name="Sestak S."/>
            <person name="Rachel R."/>
            <person name="Grossmann G."/>
            <person name="Hauser N.C."/>
            <person name="Hoheisel J.D."/>
            <person name="Tanner W."/>
            <person name="Strahl S."/>
        </authorList>
    </citation>
    <scope>SUBCELLULAR LOCATION</scope>
    <scope>GLYCOSYLATION</scope>
</reference>
<reference key="10">
    <citation type="journal article" date="2007" name="Yeast">
        <title>Characterization of Ccw12p, a major key player in cell wall stability of Saccharomyces cerevisiae.</title>
        <authorList>
            <person name="Ragni E."/>
            <person name="Sipiczki M."/>
            <person name="Strahl S."/>
        </authorList>
    </citation>
    <scope>FUNCTION</scope>
    <scope>SUBCELLULAR LOCATION</scope>
    <scope>GLYCOSYLATION AT ASN-21; ASN-81 AND ASN-97</scope>
</reference>
<reference key="11">
    <citation type="journal article" date="2012" name="Proteomics">
        <title>Sites of ubiquitin attachment in Saccharomyces cerevisiae.</title>
        <authorList>
            <person name="Starita L.M."/>
            <person name="Lo R.S."/>
            <person name="Eng J.K."/>
            <person name="von Haller P.D."/>
            <person name="Fields S."/>
        </authorList>
    </citation>
    <scope>UBIQUITINATION [LARGE SCALE ANALYSIS] AT LYS-80</scope>
    <scope>IDENTIFICATION BY MASS SPECTROMETRY [LARGE SCALE ANALYSIS]</scope>
</reference>
<feature type="signal peptide" evidence="3">
    <location>
        <begin position="1"/>
        <end position="18"/>
    </location>
</feature>
<feature type="chain" id="PRO_0000020879" description="Covalently-linked cell wall protein 12">
    <location>
        <begin position="19"/>
        <end position="112"/>
    </location>
</feature>
<feature type="propeptide" id="PRO_0000020880" description="Removed in mature form" evidence="1">
    <location>
        <begin position="113"/>
        <end position="133"/>
    </location>
</feature>
<feature type="repeat" description="1">
    <location>
        <begin position="75"/>
        <end position="88"/>
    </location>
</feature>
<feature type="repeat" description="2">
    <location>
        <begin position="91"/>
        <end position="103"/>
    </location>
</feature>
<feature type="region of interest" description="Disordered" evidence="2">
    <location>
        <begin position="79"/>
        <end position="104"/>
    </location>
</feature>
<feature type="compositionally biased region" description="Polar residues" evidence="2">
    <location>
        <begin position="81"/>
        <end position="104"/>
    </location>
</feature>
<feature type="lipid moiety-binding region" description="GPI-anchor amidated glycine" evidence="1">
    <location>
        <position position="112"/>
    </location>
</feature>
<feature type="glycosylation site" description="N-linked (GlcNAc...) asparagine" evidence="6">
    <location>
        <position position="21"/>
    </location>
</feature>
<feature type="glycosylation site" description="O-linked (Man) threonine" evidence="5">
    <location>
        <position position="23"/>
    </location>
</feature>
<feature type="glycosylation site" description="O-linked (Man) threonine" evidence="5">
    <location>
        <position position="24"/>
    </location>
</feature>
<feature type="glycosylation site" description="O-linked (Man) threonine" evidence="5">
    <location>
        <position position="26"/>
    </location>
</feature>
<feature type="glycosylation site" description="O-linked (Man) serine" evidence="5">
    <location>
        <position position="28"/>
    </location>
</feature>
<feature type="glycosylation site" description="O-linked (Man) serine" evidence="5">
    <location>
        <position position="31"/>
    </location>
</feature>
<feature type="glycosylation site" description="O-linked (Man) threonine" evidence="5">
    <location>
        <position position="32"/>
    </location>
</feature>
<feature type="glycosylation site" description="O-linked (Man) threonine" evidence="5">
    <location>
        <position position="33"/>
    </location>
</feature>
<feature type="glycosylation site" description="O-linked (Man) threonine" evidence="5">
    <location>
        <position position="36"/>
    </location>
</feature>
<feature type="glycosylation site" description="O-linked (Man) threonine" evidence="5">
    <location>
        <position position="38"/>
    </location>
</feature>
<feature type="glycosylation site" description="O-linked (Man) serine" evidence="5">
    <location>
        <position position="39"/>
    </location>
</feature>
<feature type="glycosylation site" description="O-linked (Man) serine" evidence="5">
    <location>
        <position position="46"/>
    </location>
</feature>
<feature type="glycosylation site" description="O-linked (Man) threonine" evidence="5">
    <location>
        <position position="48"/>
    </location>
</feature>
<feature type="glycosylation site" description="N-linked (GlcNAc...) asparagine" evidence="6">
    <location>
        <position position="81"/>
    </location>
</feature>
<feature type="glycosylation site" description="N-linked (GlcNAc...) asparagine" evidence="6">
    <location>
        <position position="97"/>
    </location>
</feature>
<feature type="cross-link" description="Glycyl lysine isopeptide (Lys-Gly) (interchain with G-Cter in ubiquitin)" evidence="8">
    <location>
        <position position="80"/>
    </location>
</feature>
<proteinExistence type="evidence at protein level"/>